<dbReference type="EMBL" id="CU329670">
    <property type="protein sequence ID" value="CAB16268.1"/>
    <property type="molecule type" value="Genomic_DNA"/>
</dbReference>
<dbReference type="PIR" id="T38546">
    <property type="entry name" value="T38546"/>
</dbReference>
<dbReference type="BioGRID" id="278113">
    <property type="interactions" value="33"/>
</dbReference>
<dbReference type="FunCoup" id="O14097">
    <property type="interactions" value="51"/>
</dbReference>
<dbReference type="IntAct" id="O14097">
    <property type="interactions" value="11"/>
</dbReference>
<dbReference type="STRING" id="284812.O14097"/>
<dbReference type="iPTMnet" id="O14097"/>
<dbReference type="SwissPalm" id="O14097"/>
<dbReference type="PaxDb" id="4896-SPAC2F3.14c.1"/>
<dbReference type="EnsemblFungi" id="SPAC2F3.14c.1">
    <property type="protein sequence ID" value="SPAC2F3.14c.1:pep"/>
    <property type="gene ID" value="SPAC2F3.14c"/>
</dbReference>
<dbReference type="KEGG" id="spo:2541616"/>
<dbReference type="PomBase" id="SPAC2F3.14c"/>
<dbReference type="VEuPathDB" id="FungiDB:SPAC2F3.14c"/>
<dbReference type="eggNOG" id="ENOG502RXNF">
    <property type="taxonomic scope" value="Eukaryota"/>
</dbReference>
<dbReference type="HOGENOM" id="CLU_839800_0_0_1"/>
<dbReference type="InParanoid" id="O14097"/>
<dbReference type="PRO" id="PR:O14097"/>
<dbReference type="Proteomes" id="UP000002485">
    <property type="component" value="Chromosome I"/>
</dbReference>
<dbReference type="GO" id="GO:0005634">
    <property type="term" value="C:nucleus"/>
    <property type="evidence" value="ECO:0007005"/>
    <property type="project" value="PomBase"/>
</dbReference>
<dbReference type="GO" id="GO:0005684">
    <property type="term" value="C:U2-type spliceosomal complex"/>
    <property type="evidence" value="ECO:0000314"/>
    <property type="project" value="PomBase"/>
</dbReference>
<dbReference type="GO" id="GO:0045292">
    <property type="term" value="P:mRNA cis splicing, via spliceosome"/>
    <property type="evidence" value="ECO:0000315"/>
    <property type="project" value="PomBase"/>
</dbReference>
<dbReference type="Gene3D" id="2.20.70.10">
    <property type="match status" value="1"/>
</dbReference>
<evidence type="ECO:0000256" key="1">
    <source>
        <dbReference type="SAM" id="MobiDB-lite"/>
    </source>
</evidence>
<evidence type="ECO:0000269" key="2">
    <source>
    </source>
</evidence>
<keyword id="KW-0539">Nucleus</keyword>
<keyword id="KW-1185">Reference proteome</keyword>
<sequence>MSSSKDCKATSNVDQTIPASNVNSGDFISSNTSSSNSENSNIQGKHYTQVGEDADNSFISENTPKNTFESTQTYENLESISKNEPTSEASKPLLNELVPEEPLPREPPLPNEPVPEEPLPGEPPLPDEPVPEEPLPGEPPLPNEPVPETNCHKESPLSDETVSETSKNDTSNSPTNENQAQPSIAWSEGHRIAAIWDPSQQAYYFWDTLTNTTSWNNPLEDEEQTSPLDYTAKVQFNRLSGKFMPKWASPELRSEENKAHKHMEQYFDINSSLNSHNGQSLLAERRNKRYTRKEMEQMKRRTKEKKEMKRRALYDIASDEKDFRRRKIIRY</sequence>
<gene>
    <name type="ORF">SPAC2F3.14c</name>
</gene>
<proteinExistence type="evidence at protein level"/>
<name>YERE_SCHPO</name>
<reference key="1">
    <citation type="journal article" date="2002" name="Nature">
        <title>The genome sequence of Schizosaccharomyces pombe.</title>
        <authorList>
            <person name="Wood V."/>
            <person name="Gwilliam R."/>
            <person name="Rajandream M.A."/>
            <person name="Lyne M.H."/>
            <person name="Lyne R."/>
            <person name="Stewart A."/>
            <person name="Sgouros J.G."/>
            <person name="Peat N."/>
            <person name="Hayles J."/>
            <person name="Baker S.G."/>
            <person name="Basham D."/>
            <person name="Bowman S."/>
            <person name="Brooks K."/>
            <person name="Brown D."/>
            <person name="Brown S."/>
            <person name="Chillingworth T."/>
            <person name="Churcher C.M."/>
            <person name="Collins M."/>
            <person name="Connor R."/>
            <person name="Cronin A."/>
            <person name="Davis P."/>
            <person name="Feltwell T."/>
            <person name="Fraser A."/>
            <person name="Gentles S."/>
            <person name="Goble A."/>
            <person name="Hamlin N."/>
            <person name="Harris D.E."/>
            <person name="Hidalgo J."/>
            <person name="Hodgson G."/>
            <person name="Holroyd S."/>
            <person name="Hornsby T."/>
            <person name="Howarth S."/>
            <person name="Huckle E.J."/>
            <person name="Hunt S."/>
            <person name="Jagels K."/>
            <person name="James K.D."/>
            <person name="Jones L."/>
            <person name="Jones M."/>
            <person name="Leather S."/>
            <person name="McDonald S."/>
            <person name="McLean J."/>
            <person name="Mooney P."/>
            <person name="Moule S."/>
            <person name="Mungall K.L."/>
            <person name="Murphy L.D."/>
            <person name="Niblett D."/>
            <person name="Odell C."/>
            <person name="Oliver K."/>
            <person name="O'Neil S."/>
            <person name="Pearson D."/>
            <person name="Quail M.A."/>
            <person name="Rabbinowitsch E."/>
            <person name="Rutherford K.M."/>
            <person name="Rutter S."/>
            <person name="Saunders D."/>
            <person name="Seeger K."/>
            <person name="Sharp S."/>
            <person name="Skelton J."/>
            <person name="Simmonds M.N."/>
            <person name="Squares R."/>
            <person name="Squares S."/>
            <person name="Stevens K."/>
            <person name="Taylor K."/>
            <person name="Taylor R.G."/>
            <person name="Tivey A."/>
            <person name="Walsh S.V."/>
            <person name="Warren T."/>
            <person name="Whitehead S."/>
            <person name="Woodward J.R."/>
            <person name="Volckaert G."/>
            <person name="Aert R."/>
            <person name="Robben J."/>
            <person name="Grymonprez B."/>
            <person name="Weltjens I."/>
            <person name="Vanstreels E."/>
            <person name="Rieger M."/>
            <person name="Schaefer M."/>
            <person name="Mueller-Auer S."/>
            <person name="Gabel C."/>
            <person name="Fuchs M."/>
            <person name="Duesterhoeft A."/>
            <person name="Fritzc C."/>
            <person name="Holzer E."/>
            <person name="Moestl D."/>
            <person name="Hilbert H."/>
            <person name="Borzym K."/>
            <person name="Langer I."/>
            <person name="Beck A."/>
            <person name="Lehrach H."/>
            <person name="Reinhardt R."/>
            <person name="Pohl T.M."/>
            <person name="Eger P."/>
            <person name="Zimmermann W."/>
            <person name="Wedler H."/>
            <person name="Wambutt R."/>
            <person name="Purnelle B."/>
            <person name="Goffeau A."/>
            <person name="Cadieu E."/>
            <person name="Dreano S."/>
            <person name="Gloux S."/>
            <person name="Lelaure V."/>
            <person name="Mottier S."/>
            <person name="Galibert F."/>
            <person name="Aves S.J."/>
            <person name="Xiang Z."/>
            <person name="Hunt C."/>
            <person name="Moore K."/>
            <person name="Hurst S.M."/>
            <person name="Lucas M."/>
            <person name="Rochet M."/>
            <person name="Gaillardin C."/>
            <person name="Tallada V.A."/>
            <person name="Garzon A."/>
            <person name="Thode G."/>
            <person name="Daga R.R."/>
            <person name="Cruzado L."/>
            <person name="Jimenez J."/>
            <person name="Sanchez M."/>
            <person name="del Rey F."/>
            <person name="Benito J."/>
            <person name="Dominguez A."/>
            <person name="Revuelta J.L."/>
            <person name="Moreno S."/>
            <person name="Armstrong J."/>
            <person name="Forsburg S.L."/>
            <person name="Cerutti L."/>
            <person name="Lowe T."/>
            <person name="McCombie W.R."/>
            <person name="Paulsen I."/>
            <person name="Potashkin J."/>
            <person name="Shpakovski G.V."/>
            <person name="Ussery D."/>
            <person name="Barrell B.G."/>
            <person name="Nurse P."/>
        </authorList>
    </citation>
    <scope>NUCLEOTIDE SEQUENCE [LARGE SCALE GENOMIC DNA]</scope>
    <source>
        <strain>972 / ATCC 24843</strain>
    </source>
</reference>
<reference key="2">
    <citation type="journal article" date="2006" name="Nat. Biotechnol.">
        <title>ORFeome cloning and global analysis of protein localization in the fission yeast Schizosaccharomyces pombe.</title>
        <authorList>
            <person name="Matsuyama A."/>
            <person name="Arai R."/>
            <person name="Yashiroda Y."/>
            <person name="Shirai A."/>
            <person name="Kamata A."/>
            <person name="Sekido S."/>
            <person name="Kobayashi Y."/>
            <person name="Hashimoto A."/>
            <person name="Hamamoto M."/>
            <person name="Hiraoka Y."/>
            <person name="Horinouchi S."/>
            <person name="Yoshida M."/>
        </authorList>
    </citation>
    <scope>SUBCELLULAR LOCATION [LARGE SCALE ANALYSIS]</scope>
</reference>
<accession>O14097</accession>
<protein>
    <recommendedName>
        <fullName>WW domain-containing protein C2F3.14c</fullName>
    </recommendedName>
</protein>
<comment type="interaction">
    <interactant intactId="EBI-4420697">
        <id>O14097</id>
    </interactant>
    <interactant intactId="EBI-4408349">
        <id>Q09685</id>
        <label>dre4</label>
    </interactant>
    <organismsDiffer>false</organismsDiffer>
    <experiments>3</experiments>
</comment>
<comment type="interaction">
    <interactant intactId="EBI-4420697">
        <id>O14097</id>
    </interactant>
    <interactant intactId="EBI-590830">
        <id>O14011</id>
        <label>prp19</label>
    </interactant>
    <organismsDiffer>false</organismsDiffer>
    <experiments>3</experiments>
</comment>
<comment type="subcellular location">
    <subcellularLocation>
        <location evidence="2">Nucleus</location>
    </subcellularLocation>
</comment>
<organism>
    <name type="scientific">Schizosaccharomyces pombe (strain 972 / ATCC 24843)</name>
    <name type="common">Fission yeast</name>
    <dbReference type="NCBI Taxonomy" id="284812"/>
    <lineage>
        <taxon>Eukaryota</taxon>
        <taxon>Fungi</taxon>
        <taxon>Dikarya</taxon>
        <taxon>Ascomycota</taxon>
        <taxon>Taphrinomycotina</taxon>
        <taxon>Schizosaccharomycetes</taxon>
        <taxon>Schizosaccharomycetales</taxon>
        <taxon>Schizosaccharomycetaceae</taxon>
        <taxon>Schizosaccharomyces</taxon>
    </lineage>
</organism>
<feature type="chain" id="PRO_0000316542" description="WW domain-containing protein C2F3.14c">
    <location>
        <begin position="1"/>
        <end position="331"/>
    </location>
</feature>
<feature type="domain" description="WW">
    <location>
        <begin position="187"/>
        <end position="220"/>
    </location>
</feature>
<feature type="region of interest" description="Disordered" evidence="1">
    <location>
        <begin position="1"/>
        <end position="184"/>
    </location>
</feature>
<feature type="region of interest" description="Disordered" evidence="1">
    <location>
        <begin position="290"/>
        <end position="309"/>
    </location>
</feature>
<feature type="compositionally biased region" description="Polar residues" evidence="1">
    <location>
        <begin position="9"/>
        <end position="22"/>
    </location>
</feature>
<feature type="compositionally biased region" description="Low complexity" evidence="1">
    <location>
        <begin position="23"/>
        <end position="41"/>
    </location>
</feature>
<feature type="compositionally biased region" description="Polar residues" evidence="1">
    <location>
        <begin position="57"/>
        <end position="89"/>
    </location>
</feature>
<feature type="compositionally biased region" description="Pro residues" evidence="1">
    <location>
        <begin position="105"/>
        <end position="145"/>
    </location>
</feature>
<feature type="compositionally biased region" description="Polar residues" evidence="1">
    <location>
        <begin position="158"/>
        <end position="184"/>
    </location>
</feature>
<feature type="compositionally biased region" description="Basic and acidic residues" evidence="1">
    <location>
        <begin position="292"/>
        <end position="309"/>
    </location>
</feature>